<accession>Q8NT06</accession>
<accession>Q6M7N2</accession>
<dbReference type="EMBL" id="BA000036">
    <property type="protein sequence ID" value="BAB97902.1"/>
    <property type="molecule type" value="Genomic_DNA"/>
</dbReference>
<dbReference type="EMBL" id="BX927149">
    <property type="protein sequence ID" value="CAF19219.1"/>
    <property type="molecule type" value="Genomic_DNA"/>
</dbReference>
<dbReference type="RefSeq" id="NP_599750.1">
    <property type="nucleotide sequence ID" value="NC_003450.3"/>
</dbReference>
<dbReference type="RefSeq" id="WP_003854294.1">
    <property type="nucleotide sequence ID" value="NC_006958.1"/>
</dbReference>
<dbReference type="SMR" id="Q8NT06"/>
<dbReference type="STRING" id="196627.cg0597"/>
<dbReference type="GeneID" id="1021512"/>
<dbReference type="KEGG" id="cgb:cg0597"/>
<dbReference type="KEGG" id="cgl:Cgl0508"/>
<dbReference type="PATRIC" id="fig|196627.13.peg.505"/>
<dbReference type="eggNOG" id="COG0089">
    <property type="taxonomic scope" value="Bacteria"/>
</dbReference>
<dbReference type="HOGENOM" id="CLU_037562_3_2_11"/>
<dbReference type="OrthoDB" id="9793353at2"/>
<dbReference type="BioCyc" id="CORYNE:G18NG-10071-MONOMER"/>
<dbReference type="Proteomes" id="UP000000582">
    <property type="component" value="Chromosome"/>
</dbReference>
<dbReference type="Proteomes" id="UP000001009">
    <property type="component" value="Chromosome"/>
</dbReference>
<dbReference type="GO" id="GO:1990904">
    <property type="term" value="C:ribonucleoprotein complex"/>
    <property type="evidence" value="ECO:0007669"/>
    <property type="project" value="UniProtKB-KW"/>
</dbReference>
<dbReference type="GO" id="GO:0005840">
    <property type="term" value="C:ribosome"/>
    <property type="evidence" value="ECO:0007669"/>
    <property type="project" value="UniProtKB-KW"/>
</dbReference>
<dbReference type="GO" id="GO:0019843">
    <property type="term" value="F:rRNA binding"/>
    <property type="evidence" value="ECO:0007669"/>
    <property type="project" value="UniProtKB-UniRule"/>
</dbReference>
<dbReference type="GO" id="GO:0003735">
    <property type="term" value="F:structural constituent of ribosome"/>
    <property type="evidence" value="ECO:0007669"/>
    <property type="project" value="InterPro"/>
</dbReference>
<dbReference type="GO" id="GO:0006412">
    <property type="term" value="P:translation"/>
    <property type="evidence" value="ECO:0007669"/>
    <property type="project" value="UniProtKB-UniRule"/>
</dbReference>
<dbReference type="FunFam" id="3.30.70.330:FF:000001">
    <property type="entry name" value="50S ribosomal protein L23"/>
    <property type="match status" value="1"/>
</dbReference>
<dbReference type="Gene3D" id="3.30.70.330">
    <property type="match status" value="1"/>
</dbReference>
<dbReference type="HAMAP" id="MF_01369_B">
    <property type="entry name" value="Ribosomal_uL23_B"/>
    <property type="match status" value="1"/>
</dbReference>
<dbReference type="InterPro" id="IPR012677">
    <property type="entry name" value="Nucleotide-bd_a/b_plait_sf"/>
</dbReference>
<dbReference type="InterPro" id="IPR013025">
    <property type="entry name" value="Ribosomal_uL23-like"/>
</dbReference>
<dbReference type="InterPro" id="IPR012678">
    <property type="entry name" value="Ribosomal_uL23/eL15/eS24_sf"/>
</dbReference>
<dbReference type="NCBIfam" id="NF004363">
    <property type="entry name" value="PRK05738.2-4"/>
    <property type="match status" value="1"/>
</dbReference>
<dbReference type="NCBIfam" id="NF004364">
    <property type="entry name" value="PRK05738.2-5"/>
    <property type="match status" value="1"/>
</dbReference>
<dbReference type="PANTHER" id="PTHR11620">
    <property type="entry name" value="60S RIBOSOMAL PROTEIN L23A"/>
    <property type="match status" value="1"/>
</dbReference>
<dbReference type="Pfam" id="PF00276">
    <property type="entry name" value="Ribosomal_L23"/>
    <property type="match status" value="1"/>
</dbReference>
<dbReference type="SUPFAM" id="SSF54189">
    <property type="entry name" value="Ribosomal proteins S24e, L23 and L15e"/>
    <property type="match status" value="1"/>
</dbReference>
<evidence type="ECO:0000255" key="1">
    <source>
        <dbReference type="HAMAP-Rule" id="MF_01369"/>
    </source>
</evidence>
<evidence type="ECO:0000305" key="2"/>
<gene>
    <name evidence="1" type="primary">rplW</name>
    <name type="ordered locus">Cgl0508</name>
    <name type="ordered locus">cg0597</name>
</gene>
<name>RL23_CORGL</name>
<feature type="chain" id="PRO_1000068071" description="Large ribosomal subunit protein uL23">
    <location>
        <begin position="1"/>
        <end position="101"/>
    </location>
</feature>
<reference key="1">
    <citation type="journal article" date="2003" name="Appl. Microbiol. Biotechnol.">
        <title>The Corynebacterium glutamicum genome: features and impacts on biotechnological processes.</title>
        <authorList>
            <person name="Ikeda M."/>
            <person name="Nakagawa S."/>
        </authorList>
    </citation>
    <scope>NUCLEOTIDE SEQUENCE [LARGE SCALE GENOMIC DNA]</scope>
    <source>
        <strain>ATCC 13032 / DSM 20300 / JCM 1318 / BCRC 11384 / CCUG 27702 / LMG 3730 / NBRC 12168 / NCIMB 10025 / NRRL B-2784 / 534</strain>
    </source>
</reference>
<reference key="2">
    <citation type="journal article" date="2003" name="J. Biotechnol.">
        <title>The complete Corynebacterium glutamicum ATCC 13032 genome sequence and its impact on the production of L-aspartate-derived amino acids and vitamins.</title>
        <authorList>
            <person name="Kalinowski J."/>
            <person name="Bathe B."/>
            <person name="Bartels D."/>
            <person name="Bischoff N."/>
            <person name="Bott M."/>
            <person name="Burkovski A."/>
            <person name="Dusch N."/>
            <person name="Eggeling L."/>
            <person name="Eikmanns B.J."/>
            <person name="Gaigalat L."/>
            <person name="Goesmann A."/>
            <person name="Hartmann M."/>
            <person name="Huthmacher K."/>
            <person name="Kraemer R."/>
            <person name="Linke B."/>
            <person name="McHardy A.C."/>
            <person name="Meyer F."/>
            <person name="Moeckel B."/>
            <person name="Pfefferle W."/>
            <person name="Puehler A."/>
            <person name="Rey D.A."/>
            <person name="Rueckert C."/>
            <person name="Rupp O."/>
            <person name="Sahm H."/>
            <person name="Wendisch V.F."/>
            <person name="Wiegraebe I."/>
            <person name="Tauch A."/>
        </authorList>
    </citation>
    <scope>NUCLEOTIDE SEQUENCE [LARGE SCALE GENOMIC DNA]</scope>
    <source>
        <strain>ATCC 13032 / DSM 20300 / JCM 1318 / BCRC 11384 / CCUG 27702 / LMG 3730 / NBRC 12168 / NCIMB 10025 / NRRL B-2784 / 534</strain>
    </source>
</reference>
<organism>
    <name type="scientific">Corynebacterium glutamicum (strain ATCC 13032 / DSM 20300 / JCM 1318 / BCRC 11384 / CCUG 27702 / LMG 3730 / NBRC 12168 / NCIMB 10025 / NRRL B-2784 / 534)</name>
    <dbReference type="NCBI Taxonomy" id="196627"/>
    <lineage>
        <taxon>Bacteria</taxon>
        <taxon>Bacillati</taxon>
        <taxon>Actinomycetota</taxon>
        <taxon>Actinomycetes</taxon>
        <taxon>Mycobacteriales</taxon>
        <taxon>Corynebacteriaceae</taxon>
        <taxon>Corynebacterium</taxon>
    </lineage>
</organism>
<keyword id="KW-1185">Reference proteome</keyword>
<keyword id="KW-0687">Ribonucleoprotein</keyword>
<keyword id="KW-0689">Ribosomal protein</keyword>
<keyword id="KW-0694">RNA-binding</keyword>
<keyword id="KW-0699">rRNA-binding</keyword>
<sequence>MATIANPRDIIIAPVVSEKSYGLMEQNVYTFFVSTDANKTQIKIAIEEIFGVKVASVNTVNRAGKRKRSRTGFGTRKATKRAYVTLREGSDSIDIFNGSVA</sequence>
<proteinExistence type="inferred from homology"/>
<protein>
    <recommendedName>
        <fullName evidence="1">Large ribosomal subunit protein uL23</fullName>
    </recommendedName>
    <alternativeName>
        <fullName evidence="2">50S ribosomal protein L23</fullName>
    </alternativeName>
</protein>
<comment type="function">
    <text evidence="1">One of the early assembly proteins it binds 23S rRNA. One of the proteins that surrounds the polypeptide exit tunnel on the outside of the ribosome. Forms the main docking site for trigger factor binding to the ribosome.</text>
</comment>
<comment type="subunit">
    <text evidence="1">Part of the 50S ribosomal subunit. Contacts protein L29, and trigger factor when it is bound to the ribosome.</text>
</comment>
<comment type="similarity">
    <text evidence="1">Belongs to the universal ribosomal protein uL23 family.</text>
</comment>